<name>VL2_HPV52</name>
<sequence length="466" mass="50358">MRYRRSTRHKRASATQLYQTCKASGTCPPDVIPKVEGTTIADQLLKYGSLGVFFGGLGIGTGAGSGGRAGYVPLSTRPPTSSITTSTIRPPVTVEPIGPLEPSIVSMIEETTFIESGAPAPSIPSATGFDVTTSANNTPAIINVTSIGESSVQSVSTHLNPTFTEPSIIQPPAPAEASGHVLFSSPTISTHTYEEIPMDTFVTSTDSSSVTSSTPIPGSRPTTRLGLYSRATQQVKVVDPAFMSSPQKLVTYNNPVFEGVDTDETIIFDRSQLLPAPDPDFLDIIALHRPALTSRRGTVRFSRLGNKATLRTRSGKQIGARVHYYHDISPIQPAEVQEDIELQPLLPQSVSPYTINDGLYDVYADSLQQPTFHLPSTLSTHNNTFTVPINSGIDFVYQPTMSIESGPDIPLPSLPTHTPFVPIAPTAPSTSIIVDGTDFILHPSYFLLRRRRKRFPYFFTDVRVAA</sequence>
<accession>P36763</accession>
<dbReference type="EMBL" id="X74481">
    <property type="protein sequence ID" value="CAA52589.1"/>
    <property type="molecule type" value="Genomic_DNA"/>
</dbReference>
<dbReference type="PIR" id="S36577">
    <property type="entry name" value="S36577"/>
</dbReference>
<dbReference type="SMR" id="P36763"/>
<dbReference type="Proteomes" id="UP000008692">
    <property type="component" value="Genome"/>
</dbReference>
<dbReference type="GO" id="GO:0043657">
    <property type="term" value="C:host cell"/>
    <property type="evidence" value="ECO:0007669"/>
    <property type="project" value="GOC"/>
</dbReference>
<dbReference type="GO" id="GO:0044174">
    <property type="term" value="C:host cell endosome"/>
    <property type="evidence" value="ECO:0007669"/>
    <property type="project" value="UniProtKB-KW"/>
</dbReference>
<dbReference type="GO" id="GO:0044177">
    <property type="term" value="C:host cell Golgi apparatus"/>
    <property type="evidence" value="ECO:0007669"/>
    <property type="project" value="UniProtKB-SubCell"/>
</dbReference>
<dbReference type="GO" id="GO:0042025">
    <property type="term" value="C:host cell nucleus"/>
    <property type="evidence" value="ECO:0007669"/>
    <property type="project" value="UniProtKB-SubCell"/>
</dbReference>
<dbReference type="GO" id="GO:0019028">
    <property type="term" value="C:viral capsid"/>
    <property type="evidence" value="ECO:0007669"/>
    <property type="project" value="UniProtKB-UniRule"/>
</dbReference>
<dbReference type="GO" id="GO:0003677">
    <property type="term" value="F:DNA binding"/>
    <property type="evidence" value="ECO:0007669"/>
    <property type="project" value="UniProtKB-UniRule"/>
</dbReference>
<dbReference type="GO" id="GO:0005198">
    <property type="term" value="F:structural molecule activity"/>
    <property type="evidence" value="ECO:0007669"/>
    <property type="project" value="UniProtKB-UniRule"/>
</dbReference>
<dbReference type="GO" id="GO:0075521">
    <property type="term" value="P:microtubule-dependent intracellular transport of viral material towards nucleus"/>
    <property type="evidence" value="ECO:0007669"/>
    <property type="project" value="UniProtKB-UniRule"/>
</dbReference>
<dbReference type="GO" id="GO:0046718">
    <property type="term" value="P:symbiont entry into host cell"/>
    <property type="evidence" value="ECO:0007669"/>
    <property type="project" value="UniProtKB-KW"/>
</dbReference>
<dbReference type="GO" id="GO:0075732">
    <property type="term" value="P:viral penetration into host nucleus"/>
    <property type="evidence" value="ECO:0007669"/>
    <property type="project" value="UniProtKB-KW"/>
</dbReference>
<dbReference type="HAMAP" id="MF_04003">
    <property type="entry name" value="PPV_L2"/>
    <property type="match status" value="1"/>
</dbReference>
<dbReference type="InterPro" id="IPR000784">
    <property type="entry name" value="Late_L2"/>
</dbReference>
<dbReference type="Pfam" id="PF00513">
    <property type="entry name" value="Late_protein_L2"/>
    <property type="match status" value="1"/>
</dbReference>
<gene>
    <name evidence="1" type="primary">L2</name>
</gene>
<evidence type="ECO:0000255" key="1">
    <source>
        <dbReference type="HAMAP-Rule" id="MF_04003"/>
    </source>
</evidence>
<evidence type="ECO:0000256" key="2">
    <source>
        <dbReference type="SAM" id="MobiDB-lite"/>
    </source>
</evidence>
<proteinExistence type="inferred from homology"/>
<protein>
    <recommendedName>
        <fullName evidence="1">Minor capsid protein L2</fullName>
    </recommendedName>
</protein>
<organismHost>
    <name type="scientific">Homo sapiens</name>
    <name type="common">Human</name>
    <dbReference type="NCBI Taxonomy" id="9606"/>
</organismHost>
<comment type="function">
    <text evidence="1">Minor protein of the capsid that localizes along the inner surface of the virion, within the central cavities beneath the L1 pentamers. Plays a role in capsid stabilization through interaction with the major capsid protein L1. Once the virion enters the host cell, L2 escorts the genomic DNA into the nucleus by promoting escape from the endosomal compartments and traffic through the host Golgi network. Mechanistically, the C-terminus of L2 possesses a cell-penetrating peptide that protudes from the host endosome, interacts with host cytoplasmic retromer cargo and thereby mediates the capsid delivery to the host trans-Golgi network. Plays a role through its interaction with host dynein in the intracellular microtubule-dependent transport of viral capsid toward the nucleus. Mediates the viral genome import into the nucleus through binding to host importins. Once within the nucleus, L2 localizes viral genomes to host PML bodies in order to activate early gene expression for establishment of infection. Later on, promotes late gene expression by interacting with the viral E2 protein and by inhibiting its transcriptional activation functions. During virion assembly, encapsidates the genome by direct interaction with the viral DNA.</text>
</comment>
<comment type="subunit">
    <text evidence="1">Interacts with major capsid protein L1. Interacts with E2; this interaction inhibits E2 transcriptional activity but not the DNA replication function E2. Interacts with host GADD45GIP1. Interacts with host HSPA8; this interaction is required for L2 nuclear translocation. Interacts with host importins KPNB2 and KPNB3. Forms a complex with importin alpha2-beta1 heterodimers via interaction with the importin alpha2 adapter. Interacts with host DYNLT1; this interaction is essential for virus intracellular transport during entry. Interacts (via C-terminus) with host retromer subunits VPS35 and VPS29.</text>
</comment>
<comment type="subcellular location">
    <subcellularLocation>
        <location evidence="1">Virion</location>
    </subcellularLocation>
    <subcellularLocation>
        <location evidence="1">Host nucleus</location>
    </subcellularLocation>
    <subcellularLocation>
        <location evidence="1">Host early endosome</location>
    </subcellularLocation>
    <subcellularLocation>
        <location evidence="1">Host Golgi apparatus</location>
    </subcellularLocation>
</comment>
<comment type="PTM">
    <text evidence="1">Highly phosphorylated.</text>
</comment>
<comment type="similarity">
    <text evidence="1">Belongs to the papillomaviridae L2 protein family.</text>
</comment>
<reference key="1">
    <citation type="journal article" date="1994" name="Curr. Top. Microbiol. Immunol.">
        <title>Primer-directed sequencing of human papillomavirus types.</title>
        <authorList>
            <person name="Delius H."/>
            <person name="Hofmann B."/>
        </authorList>
    </citation>
    <scope>NUCLEOTIDE SEQUENCE [GENOMIC DNA]</scope>
</reference>
<organism>
    <name type="scientific">Human papillomavirus 52</name>
    <dbReference type="NCBI Taxonomy" id="10618"/>
    <lineage>
        <taxon>Viruses</taxon>
        <taxon>Monodnaviria</taxon>
        <taxon>Shotokuvirae</taxon>
        <taxon>Cossaviricota</taxon>
        <taxon>Papovaviricetes</taxon>
        <taxon>Zurhausenvirales</taxon>
        <taxon>Papillomaviridae</taxon>
        <taxon>Firstpapillomavirinae</taxon>
        <taxon>Alphapapillomavirus</taxon>
        <taxon>Alphapapillomavirus 9</taxon>
    </lineage>
</organism>
<feature type="chain" id="PRO_0000133618" description="Minor capsid protein L2">
    <location>
        <begin position="1"/>
        <end position="466"/>
    </location>
</feature>
<feature type="region of interest" description="Disordered" evidence="2">
    <location>
        <begin position="74"/>
        <end position="95"/>
    </location>
</feature>
<feature type="region of interest" description="Disordered" evidence="2">
    <location>
        <begin position="203"/>
        <end position="224"/>
    </location>
</feature>
<feature type="short sequence motif" description="Nuclear localization signal" evidence="1">
    <location>
        <begin position="1"/>
        <end position="12"/>
    </location>
</feature>
<feature type="short sequence motif" description="Nuclear localization signal" evidence="1">
    <location>
        <begin position="447"/>
        <end position="455"/>
    </location>
</feature>
<feature type="compositionally biased region" description="Low complexity" evidence="2">
    <location>
        <begin position="74"/>
        <end position="94"/>
    </location>
</feature>
<feature type="compositionally biased region" description="Low complexity" evidence="2">
    <location>
        <begin position="203"/>
        <end position="214"/>
    </location>
</feature>
<feature type="disulfide bond" evidence="1">
    <location>
        <begin position="21"/>
        <end position="27"/>
    </location>
</feature>
<keyword id="KW-0167">Capsid protein</keyword>
<keyword id="KW-1176">Cytoplasmic inwards viral transport</keyword>
<keyword id="KW-1015">Disulfide bond</keyword>
<keyword id="KW-0238">DNA-binding</keyword>
<keyword id="KW-1039">Host endosome</keyword>
<keyword id="KW-1040">Host Golgi apparatus</keyword>
<keyword id="KW-1048">Host nucleus</keyword>
<keyword id="KW-0945">Host-virus interaction</keyword>
<keyword id="KW-0426">Late protein</keyword>
<keyword id="KW-1177">Microtubular inwards viral transport</keyword>
<keyword id="KW-0597">Phosphoprotein</keyword>
<keyword id="KW-1163">Viral penetration into host nucleus</keyword>
<keyword id="KW-0946">Virion</keyword>
<keyword id="KW-1160">Virus entry into host cell</keyword>